<reference key="1">
    <citation type="submission" date="2007-11" db="EMBL/GenBank/DDBJ databases">
        <authorList>
            <consortium name="The Salmonella enterica serovar Arizonae Genome Sequencing Project"/>
            <person name="McClelland M."/>
            <person name="Sanderson E.K."/>
            <person name="Porwollik S."/>
            <person name="Spieth J."/>
            <person name="Clifton W.S."/>
            <person name="Fulton R."/>
            <person name="Chunyan W."/>
            <person name="Wollam A."/>
            <person name="Shah N."/>
            <person name="Pepin K."/>
            <person name="Bhonagiri V."/>
            <person name="Nash W."/>
            <person name="Johnson M."/>
            <person name="Thiruvilangam P."/>
            <person name="Wilson R."/>
        </authorList>
    </citation>
    <scope>NUCLEOTIDE SEQUENCE [LARGE SCALE GENOMIC DNA]</scope>
    <source>
        <strain>ATCC BAA-731 / CDC346-86 / RSK2980</strain>
    </source>
</reference>
<proteinExistence type="inferred from homology"/>
<dbReference type="EC" id="2.7.1.148" evidence="1"/>
<dbReference type="EMBL" id="CP000880">
    <property type="protein sequence ID" value="ABX21079.1"/>
    <property type="molecule type" value="Genomic_DNA"/>
</dbReference>
<dbReference type="SMR" id="A9MP98"/>
<dbReference type="STRING" id="41514.SARI_01174"/>
<dbReference type="KEGG" id="ses:SARI_01174"/>
<dbReference type="HOGENOM" id="CLU_053057_3_0_6"/>
<dbReference type="UniPathway" id="UPA00056">
    <property type="reaction ID" value="UER00094"/>
</dbReference>
<dbReference type="Proteomes" id="UP000002084">
    <property type="component" value="Chromosome"/>
</dbReference>
<dbReference type="GO" id="GO:0050515">
    <property type="term" value="F:4-(cytidine 5'-diphospho)-2-C-methyl-D-erythritol kinase activity"/>
    <property type="evidence" value="ECO:0007669"/>
    <property type="project" value="UniProtKB-UniRule"/>
</dbReference>
<dbReference type="GO" id="GO:0005524">
    <property type="term" value="F:ATP binding"/>
    <property type="evidence" value="ECO:0007669"/>
    <property type="project" value="UniProtKB-UniRule"/>
</dbReference>
<dbReference type="GO" id="GO:0019288">
    <property type="term" value="P:isopentenyl diphosphate biosynthetic process, methylerythritol 4-phosphate pathway"/>
    <property type="evidence" value="ECO:0007669"/>
    <property type="project" value="UniProtKB-UniRule"/>
</dbReference>
<dbReference type="GO" id="GO:0016114">
    <property type="term" value="P:terpenoid biosynthetic process"/>
    <property type="evidence" value="ECO:0007669"/>
    <property type="project" value="InterPro"/>
</dbReference>
<dbReference type="FunFam" id="3.30.230.10:FF:000022">
    <property type="entry name" value="4-diphosphocytidyl-2-C-methyl-D-erythritol kinase"/>
    <property type="match status" value="1"/>
</dbReference>
<dbReference type="FunFam" id="3.30.70.890:FF:000004">
    <property type="entry name" value="4-diphosphocytidyl-2-C-methyl-D-erythritol kinase"/>
    <property type="match status" value="1"/>
</dbReference>
<dbReference type="Gene3D" id="3.30.230.10">
    <property type="match status" value="1"/>
</dbReference>
<dbReference type="Gene3D" id="3.30.70.890">
    <property type="entry name" value="GHMP kinase, C-terminal domain"/>
    <property type="match status" value="1"/>
</dbReference>
<dbReference type="HAMAP" id="MF_00061">
    <property type="entry name" value="IspE"/>
    <property type="match status" value="1"/>
</dbReference>
<dbReference type="InterPro" id="IPR013750">
    <property type="entry name" value="GHMP_kinase_C_dom"/>
</dbReference>
<dbReference type="InterPro" id="IPR036554">
    <property type="entry name" value="GHMP_kinase_C_sf"/>
</dbReference>
<dbReference type="InterPro" id="IPR006204">
    <property type="entry name" value="GHMP_kinase_N_dom"/>
</dbReference>
<dbReference type="InterPro" id="IPR004424">
    <property type="entry name" value="IspE"/>
</dbReference>
<dbReference type="InterPro" id="IPR020568">
    <property type="entry name" value="Ribosomal_Su5_D2-typ_SF"/>
</dbReference>
<dbReference type="InterPro" id="IPR014721">
    <property type="entry name" value="Ribsml_uS5_D2-typ_fold_subgr"/>
</dbReference>
<dbReference type="NCBIfam" id="TIGR00154">
    <property type="entry name" value="ispE"/>
    <property type="match status" value="1"/>
</dbReference>
<dbReference type="PANTHER" id="PTHR43527">
    <property type="entry name" value="4-DIPHOSPHOCYTIDYL-2-C-METHYL-D-ERYTHRITOL KINASE, CHLOROPLASTIC"/>
    <property type="match status" value="1"/>
</dbReference>
<dbReference type="PANTHER" id="PTHR43527:SF2">
    <property type="entry name" value="4-DIPHOSPHOCYTIDYL-2-C-METHYL-D-ERYTHRITOL KINASE, CHLOROPLASTIC"/>
    <property type="match status" value="1"/>
</dbReference>
<dbReference type="Pfam" id="PF08544">
    <property type="entry name" value="GHMP_kinases_C"/>
    <property type="match status" value="1"/>
</dbReference>
<dbReference type="Pfam" id="PF00288">
    <property type="entry name" value="GHMP_kinases_N"/>
    <property type="match status" value="1"/>
</dbReference>
<dbReference type="PIRSF" id="PIRSF010376">
    <property type="entry name" value="IspE"/>
    <property type="match status" value="1"/>
</dbReference>
<dbReference type="SUPFAM" id="SSF55060">
    <property type="entry name" value="GHMP Kinase, C-terminal domain"/>
    <property type="match status" value="1"/>
</dbReference>
<dbReference type="SUPFAM" id="SSF54211">
    <property type="entry name" value="Ribosomal protein S5 domain 2-like"/>
    <property type="match status" value="1"/>
</dbReference>
<evidence type="ECO:0000255" key="1">
    <source>
        <dbReference type="HAMAP-Rule" id="MF_00061"/>
    </source>
</evidence>
<comment type="function">
    <text evidence="1">Catalyzes the phosphorylation of the position 2 hydroxy group of 4-diphosphocytidyl-2C-methyl-D-erythritol.</text>
</comment>
<comment type="catalytic activity">
    <reaction evidence="1">
        <text>4-CDP-2-C-methyl-D-erythritol + ATP = 4-CDP-2-C-methyl-D-erythritol 2-phosphate + ADP + H(+)</text>
        <dbReference type="Rhea" id="RHEA:18437"/>
        <dbReference type="ChEBI" id="CHEBI:15378"/>
        <dbReference type="ChEBI" id="CHEBI:30616"/>
        <dbReference type="ChEBI" id="CHEBI:57823"/>
        <dbReference type="ChEBI" id="CHEBI:57919"/>
        <dbReference type="ChEBI" id="CHEBI:456216"/>
        <dbReference type="EC" id="2.7.1.148"/>
    </reaction>
</comment>
<comment type="pathway">
    <text evidence="1">Isoprenoid biosynthesis; isopentenyl diphosphate biosynthesis via DXP pathway; isopentenyl diphosphate from 1-deoxy-D-xylulose 5-phosphate: step 3/6.</text>
</comment>
<comment type="subunit">
    <text evidence="1">Homodimer.</text>
</comment>
<comment type="similarity">
    <text evidence="1">Belongs to the GHMP kinase family. IspE subfamily.</text>
</comment>
<organism>
    <name type="scientific">Salmonella arizonae (strain ATCC BAA-731 / CDC346-86 / RSK2980)</name>
    <dbReference type="NCBI Taxonomy" id="41514"/>
    <lineage>
        <taxon>Bacteria</taxon>
        <taxon>Pseudomonadati</taxon>
        <taxon>Pseudomonadota</taxon>
        <taxon>Gammaproteobacteria</taxon>
        <taxon>Enterobacterales</taxon>
        <taxon>Enterobacteriaceae</taxon>
        <taxon>Salmonella</taxon>
    </lineage>
</organism>
<protein>
    <recommendedName>
        <fullName evidence="1">4-diphosphocytidyl-2-C-methyl-D-erythritol kinase</fullName>
        <shortName evidence="1">CMK</shortName>
        <ecNumber evidence="1">2.7.1.148</ecNumber>
    </recommendedName>
    <alternativeName>
        <fullName evidence="1">4-(cytidine-5'-diphospho)-2-C-methyl-D-erythritol kinase</fullName>
    </alternativeName>
</protein>
<gene>
    <name evidence="1" type="primary">ispE</name>
    <name type="ordered locus">SARI_01174</name>
</gene>
<keyword id="KW-0067">ATP-binding</keyword>
<keyword id="KW-0414">Isoprene biosynthesis</keyword>
<keyword id="KW-0418">Kinase</keyword>
<keyword id="KW-0547">Nucleotide-binding</keyword>
<keyword id="KW-1185">Reference proteome</keyword>
<keyword id="KW-0808">Transferase</keyword>
<name>ISPE_SALAR</name>
<sequence length="283" mass="30878">MMTYWPSPAKLNLFLYITGQRADGYHTLQTLFQFLDYGDTLHIEPRRDGEIHLLTPVNGVENEDNLIVRAARGLMKAALESGRLPAGSGADISIEKRLPMGGGLGGGSSNAATVLVALNHLWQCGLSVDELAKLGLTLGADVPVFVRGHAAFAEGVGEILTPVNPPEKWYLVAHPGVIIPTPVIFKDPQLPRNTPKRSIDTLLKCEFSNDCEVIARKRFREVDAALSWLLEYAPSRLTGTGACVFAEFDTEPCARQVLEQAPEWLNAFVAKGVNLSPLHRSLL</sequence>
<accession>A9MP98</accession>
<feature type="chain" id="PRO_1000075056" description="4-diphosphocytidyl-2-C-methyl-D-erythritol kinase">
    <location>
        <begin position="1"/>
        <end position="283"/>
    </location>
</feature>
<feature type="active site" evidence="1">
    <location>
        <position position="10"/>
    </location>
</feature>
<feature type="active site" evidence="1">
    <location>
        <position position="141"/>
    </location>
</feature>
<feature type="binding site" evidence="1">
    <location>
        <begin position="99"/>
        <end position="109"/>
    </location>
    <ligand>
        <name>ATP</name>
        <dbReference type="ChEBI" id="CHEBI:30616"/>
    </ligand>
</feature>